<proteinExistence type="inferred from homology"/>
<sequence length="157" mass="18008">MADKKEPKITVAAENRKARFNYAIEDTIEAGIALTGTEVKSIRSGKSTIAESYADSRDGEIWLINANIPEYLQANRFNHEPKRPRKLLLHRKQINKLMGAVEREGMTLIPLKLYFNERGRAKLLLAVAKGKKLHDKRESEKKRDWGREKGRLLRARG</sequence>
<reference key="1">
    <citation type="journal article" date="2007" name="Science">
        <title>Legumes symbioses: absence of nod genes in photosynthetic bradyrhizobia.</title>
        <authorList>
            <person name="Giraud E."/>
            <person name="Moulin L."/>
            <person name="Vallenet D."/>
            <person name="Barbe V."/>
            <person name="Cytryn E."/>
            <person name="Avarre J.-C."/>
            <person name="Jaubert M."/>
            <person name="Simon D."/>
            <person name="Cartieaux F."/>
            <person name="Prin Y."/>
            <person name="Bena G."/>
            <person name="Hannibal L."/>
            <person name="Fardoux J."/>
            <person name="Kojadinovic M."/>
            <person name="Vuillet L."/>
            <person name="Lajus A."/>
            <person name="Cruveiller S."/>
            <person name="Rouy Z."/>
            <person name="Mangenot S."/>
            <person name="Segurens B."/>
            <person name="Dossat C."/>
            <person name="Franck W.L."/>
            <person name="Chang W.-S."/>
            <person name="Saunders E."/>
            <person name="Bruce D."/>
            <person name="Richardson P."/>
            <person name="Normand P."/>
            <person name="Dreyfus B."/>
            <person name="Pignol D."/>
            <person name="Stacey G."/>
            <person name="Emerich D."/>
            <person name="Vermeglio A."/>
            <person name="Medigue C."/>
            <person name="Sadowsky M."/>
        </authorList>
    </citation>
    <scope>NUCLEOTIDE SEQUENCE [LARGE SCALE GENOMIC DNA]</scope>
    <source>
        <strain>BTAi1 / ATCC BAA-1182</strain>
    </source>
</reference>
<gene>
    <name evidence="1" type="primary">smpB</name>
    <name type="ordered locus">BBta_4692</name>
</gene>
<feature type="chain" id="PRO_1000002005" description="SsrA-binding protein">
    <location>
        <begin position="1"/>
        <end position="157"/>
    </location>
</feature>
<feature type="region of interest" description="Disordered" evidence="2">
    <location>
        <begin position="133"/>
        <end position="157"/>
    </location>
</feature>
<feature type="compositionally biased region" description="Basic and acidic residues" evidence="2">
    <location>
        <begin position="135"/>
        <end position="151"/>
    </location>
</feature>
<organism>
    <name type="scientific">Bradyrhizobium sp. (strain BTAi1 / ATCC BAA-1182)</name>
    <dbReference type="NCBI Taxonomy" id="288000"/>
    <lineage>
        <taxon>Bacteria</taxon>
        <taxon>Pseudomonadati</taxon>
        <taxon>Pseudomonadota</taxon>
        <taxon>Alphaproteobacteria</taxon>
        <taxon>Hyphomicrobiales</taxon>
        <taxon>Nitrobacteraceae</taxon>
        <taxon>Bradyrhizobium</taxon>
    </lineage>
</organism>
<name>SSRP_BRASB</name>
<evidence type="ECO:0000255" key="1">
    <source>
        <dbReference type="HAMAP-Rule" id="MF_00023"/>
    </source>
</evidence>
<evidence type="ECO:0000256" key="2">
    <source>
        <dbReference type="SAM" id="MobiDB-lite"/>
    </source>
</evidence>
<protein>
    <recommendedName>
        <fullName evidence="1">SsrA-binding protein</fullName>
    </recommendedName>
    <alternativeName>
        <fullName evidence="1">Small protein B</fullName>
    </alternativeName>
</protein>
<dbReference type="EMBL" id="CP000494">
    <property type="protein sequence ID" value="ABQ36720.1"/>
    <property type="molecule type" value="Genomic_DNA"/>
</dbReference>
<dbReference type="RefSeq" id="WP_012044706.1">
    <property type="nucleotide sequence ID" value="NC_009485.1"/>
</dbReference>
<dbReference type="SMR" id="A5EKM6"/>
<dbReference type="STRING" id="288000.BBta_4692"/>
<dbReference type="KEGG" id="bbt:BBta_4692"/>
<dbReference type="eggNOG" id="COG0691">
    <property type="taxonomic scope" value="Bacteria"/>
</dbReference>
<dbReference type="HOGENOM" id="CLU_108953_0_1_5"/>
<dbReference type="OrthoDB" id="9805462at2"/>
<dbReference type="Proteomes" id="UP000000246">
    <property type="component" value="Chromosome"/>
</dbReference>
<dbReference type="GO" id="GO:0005829">
    <property type="term" value="C:cytosol"/>
    <property type="evidence" value="ECO:0007669"/>
    <property type="project" value="TreeGrafter"/>
</dbReference>
<dbReference type="GO" id="GO:0003723">
    <property type="term" value="F:RNA binding"/>
    <property type="evidence" value="ECO:0007669"/>
    <property type="project" value="UniProtKB-UniRule"/>
</dbReference>
<dbReference type="GO" id="GO:0070929">
    <property type="term" value="P:trans-translation"/>
    <property type="evidence" value="ECO:0007669"/>
    <property type="project" value="UniProtKB-UniRule"/>
</dbReference>
<dbReference type="CDD" id="cd09294">
    <property type="entry name" value="SmpB"/>
    <property type="match status" value="1"/>
</dbReference>
<dbReference type="Gene3D" id="2.40.280.10">
    <property type="match status" value="1"/>
</dbReference>
<dbReference type="HAMAP" id="MF_00023">
    <property type="entry name" value="SmpB"/>
    <property type="match status" value="1"/>
</dbReference>
<dbReference type="InterPro" id="IPR023620">
    <property type="entry name" value="SmpB"/>
</dbReference>
<dbReference type="InterPro" id="IPR000037">
    <property type="entry name" value="SsrA-bd_prot"/>
</dbReference>
<dbReference type="InterPro" id="IPR020081">
    <property type="entry name" value="SsrA-bd_prot_CS"/>
</dbReference>
<dbReference type="NCBIfam" id="NF003843">
    <property type="entry name" value="PRK05422.1"/>
    <property type="match status" value="1"/>
</dbReference>
<dbReference type="NCBIfam" id="TIGR00086">
    <property type="entry name" value="smpB"/>
    <property type="match status" value="1"/>
</dbReference>
<dbReference type="PANTHER" id="PTHR30308:SF2">
    <property type="entry name" value="SSRA-BINDING PROTEIN"/>
    <property type="match status" value="1"/>
</dbReference>
<dbReference type="PANTHER" id="PTHR30308">
    <property type="entry name" value="TMRNA-BINDING COMPONENT OF TRANS-TRANSLATION TAGGING COMPLEX"/>
    <property type="match status" value="1"/>
</dbReference>
<dbReference type="Pfam" id="PF01668">
    <property type="entry name" value="SmpB"/>
    <property type="match status" value="1"/>
</dbReference>
<dbReference type="SUPFAM" id="SSF74982">
    <property type="entry name" value="Small protein B (SmpB)"/>
    <property type="match status" value="1"/>
</dbReference>
<dbReference type="PROSITE" id="PS01317">
    <property type="entry name" value="SSRP"/>
    <property type="match status" value="1"/>
</dbReference>
<comment type="function">
    <text evidence="1">Required for rescue of stalled ribosomes mediated by trans-translation. Binds to transfer-messenger RNA (tmRNA), required for stable association of tmRNA with ribosomes. tmRNA and SmpB together mimic tRNA shape, replacing the anticodon stem-loop with SmpB. tmRNA is encoded by the ssrA gene; the 2 termini fold to resemble tRNA(Ala) and it encodes a 'tag peptide', a short internal open reading frame. During trans-translation Ala-aminoacylated tmRNA acts like a tRNA, entering the A-site of stalled ribosomes, displacing the stalled mRNA. The ribosome then switches to translate the ORF on the tmRNA; the nascent peptide is terminated with the 'tag peptide' encoded by the tmRNA and targeted for degradation. The ribosome is freed to recommence translation, which seems to be the essential function of trans-translation.</text>
</comment>
<comment type="subcellular location">
    <subcellularLocation>
        <location evidence="1">Cytoplasm</location>
    </subcellularLocation>
    <text evidence="1">The tmRNA-SmpB complex associates with stalled 70S ribosomes.</text>
</comment>
<comment type="similarity">
    <text evidence="1">Belongs to the SmpB family.</text>
</comment>
<accession>A5EKM6</accession>
<keyword id="KW-0963">Cytoplasm</keyword>
<keyword id="KW-1185">Reference proteome</keyword>
<keyword id="KW-0694">RNA-binding</keyword>